<protein>
    <recommendedName>
        <fullName evidence="3">1-acylglycerol-3-phosphate O-acyltransferase ABHD5</fullName>
        <ecNumber evidence="3">2.3.1.51</ecNumber>
    </recommendedName>
    <alternativeName>
        <fullName>Abhydrolase domain-containing protein 5</fullName>
    </alternativeName>
</protein>
<evidence type="ECO:0000250" key="1"/>
<evidence type="ECO:0000250" key="2">
    <source>
        <dbReference type="UniProtKB" id="Q6QA69"/>
    </source>
</evidence>
<evidence type="ECO:0000250" key="3">
    <source>
        <dbReference type="UniProtKB" id="Q8WTS1"/>
    </source>
</evidence>
<evidence type="ECO:0000250" key="4">
    <source>
        <dbReference type="UniProtKB" id="Q9DBL9"/>
    </source>
</evidence>
<evidence type="ECO:0000255" key="5"/>
<evidence type="ECO:0000305" key="6"/>
<feature type="initiator methionine" description="Removed" evidence="3">
    <location>
        <position position="1"/>
    </location>
</feature>
<feature type="chain" id="PRO_0000080869" description="1-acylglycerol-3-phosphate O-acyltransferase ABHD5">
    <location>
        <begin position="2"/>
        <end position="349"/>
    </location>
</feature>
<feature type="domain" description="AB hydrolase-1" evidence="5">
    <location>
        <begin position="77"/>
        <end position="184"/>
    </location>
</feature>
<feature type="short sequence motif" description="HXXXXD motif">
    <location>
        <begin position="327"/>
        <end position="332"/>
    </location>
</feature>
<feature type="modified residue" description="N-acetylalanine" evidence="3">
    <location>
        <position position="2"/>
    </location>
</feature>
<feature type="modified residue" description="Phosphoserine" evidence="2">
    <location>
        <position position="122"/>
    </location>
</feature>
<dbReference type="EC" id="2.3.1.51" evidence="3"/>
<dbReference type="EMBL" id="CR858663">
    <property type="protein sequence ID" value="CAH90876.1"/>
    <property type="molecule type" value="mRNA"/>
</dbReference>
<dbReference type="RefSeq" id="NP_001127344.1">
    <property type="nucleotide sequence ID" value="NM_001133872.1"/>
</dbReference>
<dbReference type="SMR" id="Q5RBI4"/>
<dbReference type="FunCoup" id="Q5RBI4">
    <property type="interactions" value="2361"/>
</dbReference>
<dbReference type="STRING" id="9601.ENSPPYP00000015621"/>
<dbReference type="ESTHER" id="ponab-abhd5">
    <property type="family name" value="CGI-58_ABHD5_ABHD4"/>
</dbReference>
<dbReference type="MEROPS" id="S33.975"/>
<dbReference type="Ensembl" id="ENSPPYT00000016242.3">
    <property type="protein sequence ID" value="ENSPPYP00000015621.2"/>
    <property type="gene ID" value="ENSPPYG00000013964.3"/>
</dbReference>
<dbReference type="GeneID" id="100174407"/>
<dbReference type="KEGG" id="pon:100174407"/>
<dbReference type="CTD" id="51099"/>
<dbReference type="eggNOG" id="KOG4409">
    <property type="taxonomic scope" value="Eukaryota"/>
</dbReference>
<dbReference type="GeneTree" id="ENSGT00390000016277"/>
<dbReference type="HOGENOM" id="CLU_017361_0_0_1"/>
<dbReference type="InParanoid" id="Q5RBI4"/>
<dbReference type="OMA" id="ARDPIMD"/>
<dbReference type="OrthoDB" id="7457040at2759"/>
<dbReference type="TreeFam" id="TF314196"/>
<dbReference type="Proteomes" id="UP000001595">
    <property type="component" value="Chromosome 3"/>
</dbReference>
<dbReference type="GO" id="GO:0005829">
    <property type="term" value="C:cytosol"/>
    <property type="evidence" value="ECO:0000250"/>
    <property type="project" value="UniProtKB"/>
</dbReference>
<dbReference type="GO" id="GO:0005811">
    <property type="term" value="C:lipid droplet"/>
    <property type="evidence" value="ECO:0000250"/>
    <property type="project" value="UniProtKB"/>
</dbReference>
<dbReference type="GO" id="GO:0005739">
    <property type="term" value="C:mitochondrion"/>
    <property type="evidence" value="ECO:0007669"/>
    <property type="project" value="TreeGrafter"/>
</dbReference>
<dbReference type="GO" id="GO:0005654">
    <property type="term" value="C:nucleoplasm"/>
    <property type="evidence" value="ECO:0007669"/>
    <property type="project" value="Ensembl"/>
</dbReference>
<dbReference type="GO" id="GO:0003841">
    <property type="term" value="F:1-acylglycerol-3-phosphate O-acyltransferase activity"/>
    <property type="evidence" value="ECO:0000250"/>
    <property type="project" value="UniProtKB"/>
</dbReference>
<dbReference type="GO" id="GO:0052689">
    <property type="term" value="F:carboxylic ester hydrolase activity"/>
    <property type="evidence" value="ECO:0007669"/>
    <property type="project" value="TreeGrafter"/>
</dbReference>
<dbReference type="GO" id="GO:0060229">
    <property type="term" value="F:lipase activator activity"/>
    <property type="evidence" value="ECO:0007669"/>
    <property type="project" value="Ensembl"/>
</dbReference>
<dbReference type="GO" id="GO:0030154">
    <property type="term" value="P:cell differentiation"/>
    <property type="evidence" value="ECO:0007669"/>
    <property type="project" value="UniProtKB-KW"/>
</dbReference>
<dbReference type="GO" id="GO:0006631">
    <property type="term" value="P:fatty acid metabolic process"/>
    <property type="evidence" value="ECO:0007669"/>
    <property type="project" value="UniProtKB-KW"/>
</dbReference>
<dbReference type="GO" id="GO:0055088">
    <property type="term" value="P:lipid homeostasis"/>
    <property type="evidence" value="ECO:0007669"/>
    <property type="project" value="TreeGrafter"/>
</dbReference>
<dbReference type="GO" id="GO:0010891">
    <property type="term" value="P:negative regulation of triglyceride storage"/>
    <property type="evidence" value="ECO:0000250"/>
    <property type="project" value="UniProtKB"/>
</dbReference>
<dbReference type="GO" id="GO:0006654">
    <property type="term" value="P:phosphatidic acid biosynthetic process"/>
    <property type="evidence" value="ECO:0000250"/>
    <property type="project" value="UniProtKB"/>
</dbReference>
<dbReference type="GO" id="GO:0010898">
    <property type="term" value="P:positive regulation of triglyceride catabolic process"/>
    <property type="evidence" value="ECO:0000250"/>
    <property type="project" value="UniProtKB"/>
</dbReference>
<dbReference type="FunFam" id="3.40.50.1820:FF:000019">
    <property type="entry name" value="1-acylglycerol-3-phosphate O-acyltransferase ABHD5"/>
    <property type="match status" value="1"/>
</dbReference>
<dbReference type="Gene3D" id="3.40.50.1820">
    <property type="entry name" value="alpha/beta hydrolase"/>
    <property type="match status" value="1"/>
</dbReference>
<dbReference type="InterPro" id="IPR000073">
    <property type="entry name" value="AB_hydrolase_1"/>
</dbReference>
<dbReference type="InterPro" id="IPR029058">
    <property type="entry name" value="AB_hydrolase_fold"/>
</dbReference>
<dbReference type="PANTHER" id="PTHR42886:SF34">
    <property type="entry name" value="1-ACYLGLYCEROL-3-PHOSPHATE O-ACYLTRANSFERASE ABHD5"/>
    <property type="match status" value="1"/>
</dbReference>
<dbReference type="PANTHER" id="PTHR42886">
    <property type="entry name" value="RE40534P-RELATED"/>
    <property type="match status" value="1"/>
</dbReference>
<dbReference type="Pfam" id="PF00561">
    <property type="entry name" value="Abhydrolase_1"/>
    <property type="match status" value="1"/>
</dbReference>
<dbReference type="PRINTS" id="PR00111">
    <property type="entry name" value="ABHYDROLASE"/>
</dbReference>
<dbReference type="SUPFAM" id="SSF53474">
    <property type="entry name" value="alpha/beta-Hydrolases"/>
    <property type="match status" value="1"/>
</dbReference>
<reference key="1">
    <citation type="submission" date="2004-11" db="EMBL/GenBank/DDBJ databases">
        <authorList>
            <consortium name="The German cDNA consortium"/>
        </authorList>
    </citation>
    <scope>NUCLEOTIDE SEQUENCE [LARGE SCALE MRNA]</scope>
    <source>
        <tissue>Brain cortex</tissue>
    </source>
</reference>
<sequence>MAAEEEEVDSADTGERSGWLTGWLPTWCPTSTSHLKEAEEKMLKCVPCTYKKEPVHISNGNKIWTLKFSHNISNKTPLVLLHGFGGGLGLWALNFGDLCTNRPVYAFDLLGFGRSSRPRFDSDAEEVENQFVESIEEWRCALGLDKMILLGHNLGGFLAAAYSLKYPSRVNHLILVEPWGFPERPDLADQDRPIPVWIRALGAALTPFNPLAGLRIAGPFGLSLVQRLRPDFKRKYSSMFEDDTVTEYIYHCNVQTPSGETAFKNMTIPYGWAKRPMLQRIGKMHPDIPVSVIFGARSCIDGNSGTSIQSLRPHSYVKTIAILGAGHYVYADQPEEFNQKVKEICDTVD</sequence>
<gene>
    <name evidence="3" type="primary">ABHD5</name>
</gene>
<comment type="function">
    <text evidence="3 4">Coenzyme A-dependent lysophosphatidic acid acyltransferase that catalyzes the transfer of an acyl group on a lysophosphatidic acid. Functions preferentially with 1-oleoyl-lysophosphatidic acid followed by 1-palmitoyl-lysophosphatidic acid, 1-stearoyl-lysophosphatidic acid and 1-arachidonoyl-lysophosphatidic acid as lipid acceptor. Functions preferentially with arachidonoyl-CoA followed by oleoyl-CoA as acyl group donors (By similarity). Functions in phosphatidic acid biosynthesis (By similarity). May regulate the cellular storage of triacylglycerol through activation of the phospholipase PNPLA2 (By similarity). Involved in keratinocyte differentiation (By similarity). Regulates lipid droplet fusion (By similarity).</text>
</comment>
<comment type="catalytic activity">
    <reaction evidence="3">
        <text>a 1-acyl-sn-glycero-3-phosphate + an acyl-CoA = a 1,2-diacyl-sn-glycero-3-phosphate + CoA</text>
        <dbReference type="Rhea" id="RHEA:19709"/>
        <dbReference type="ChEBI" id="CHEBI:57287"/>
        <dbReference type="ChEBI" id="CHEBI:57970"/>
        <dbReference type="ChEBI" id="CHEBI:58342"/>
        <dbReference type="ChEBI" id="CHEBI:58608"/>
        <dbReference type="EC" id="2.3.1.51"/>
    </reaction>
    <physiologicalReaction direction="left-to-right" evidence="3">
        <dbReference type="Rhea" id="RHEA:19710"/>
    </physiologicalReaction>
</comment>
<comment type="catalytic activity">
    <reaction evidence="4">
        <text>1-(9Z-octadecenoyl)-sn-glycero-3-phosphate + (9Z)-octadecenoyl-CoA = 1,2-di-(9Z-octadecenoyl)-sn-glycero-3-phosphate + CoA</text>
        <dbReference type="Rhea" id="RHEA:37131"/>
        <dbReference type="ChEBI" id="CHEBI:57287"/>
        <dbReference type="ChEBI" id="CHEBI:57387"/>
        <dbReference type="ChEBI" id="CHEBI:74544"/>
        <dbReference type="ChEBI" id="CHEBI:74546"/>
    </reaction>
    <physiologicalReaction direction="left-to-right" evidence="4">
        <dbReference type="Rhea" id="RHEA:37132"/>
    </physiologicalReaction>
</comment>
<comment type="catalytic activity">
    <reaction evidence="4">
        <text>1-(9Z-octadecenoyl)-sn-glycero-3-phosphate + hexadecanoyl-CoA = 1-(9Z)-octadecenoyl-2-hexadecanoyl-sn-glycero-3-phosphate + CoA</text>
        <dbReference type="Rhea" id="RHEA:37143"/>
        <dbReference type="ChEBI" id="CHEBI:57287"/>
        <dbReference type="ChEBI" id="CHEBI:57379"/>
        <dbReference type="ChEBI" id="CHEBI:74544"/>
        <dbReference type="ChEBI" id="CHEBI:74551"/>
    </reaction>
    <physiologicalReaction direction="left-to-right" evidence="4">
        <dbReference type="Rhea" id="RHEA:37144"/>
    </physiologicalReaction>
</comment>
<comment type="catalytic activity">
    <reaction evidence="4">
        <text>1-(9Z-octadecenoyl)-sn-glycero-3-phosphate + octadecanoyl-CoA = 1-(9Z-octadecenoyl)-2-octadecanoyl-sn-glycero-3-phosphate + CoA</text>
        <dbReference type="Rhea" id="RHEA:37147"/>
        <dbReference type="ChEBI" id="CHEBI:57287"/>
        <dbReference type="ChEBI" id="CHEBI:57394"/>
        <dbReference type="ChEBI" id="CHEBI:74544"/>
        <dbReference type="ChEBI" id="CHEBI:74552"/>
    </reaction>
    <physiologicalReaction direction="left-to-right" evidence="4">
        <dbReference type="Rhea" id="RHEA:37148"/>
    </physiologicalReaction>
</comment>
<comment type="catalytic activity">
    <reaction evidence="4">
        <text>1-(9Z-octadecenoyl)-sn-glycero-3-phosphate + (5Z,8Z,11Z,14Z)-eicosatetraenoyl-CoA = 1-(9Z)-octadecenoyl-2-(5Z,8Z,11Z,14Z)-eicosatetraenoyl-sn-glycero-3-phosphate + CoA</text>
        <dbReference type="Rhea" id="RHEA:37443"/>
        <dbReference type="ChEBI" id="CHEBI:57287"/>
        <dbReference type="ChEBI" id="CHEBI:57368"/>
        <dbReference type="ChEBI" id="CHEBI:74544"/>
        <dbReference type="ChEBI" id="CHEBI:74928"/>
    </reaction>
    <physiologicalReaction direction="left-to-right" evidence="4">
        <dbReference type="Rhea" id="RHEA:37444"/>
    </physiologicalReaction>
</comment>
<comment type="catalytic activity">
    <reaction evidence="4">
        <text>eicosanoyl-CoA + 1-(9Z-octadecenoyl)-sn-glycero-3-phosphate = 1-(9Z)-octadecenoyl-2-eicosanoyl-sn-glycero-3-phosphate + CoA</text>
        <dbReference type="Rhea" id="RHEA:37451"/>
        <dbReference type="ChEBI" id="CHEBI:57287"/>
        <dbReference type="ChEBI" id="CHEBI:57380"/>
        <dbReference type="ChEBI" id="CHEBI:74544"/>
        <dbReference type="ChEBI" id="CHEBI:74937"/>
    </reaction>
    <physiologicalReaction direction="left-to-right" evidence="4">
        <dbReference type="Rhea" id="RHEA:37452"/>
    </physiologicalReaction>
</comment>
<comment type="catalytic activity">
    <reaction evidence="4">
        <text>1-hexadecanoyl-sn-glycero-3-phosphate + (9Z)-octadecenoyl-CoA = 1-hexadecanoyl-2-(9Z-octadecenoyl)-sn-glycero-3-phosphate + CoA</text>
        <dbReference type="Rhea" id="RHEA:33187"/>
        <dbReference type="ChEBI" id="CHEBI:57287"/>
        <dbReference type="ChEBI" id="CHEBI:57387"/>
        <dbReference type="ChEBI" id="CHEBI:57518"/>
        <dbReference type="ChEBI" id="CHEBI:64839"/>
    </reaction>
    <physiologicalReaction direction="left-to-right" evidence="4">
        <dbReference type="Rhea" id="RHEA:33188"/>
    </physiologicalReaction>
</comment>
<comment type="catalytic activity">
    <reaction evidence="4">
        <text>1-octadecanoyl-sn-glycero-3-phosphate + (9Z)-octadecenoyl-CoA = 1-octadecanoyl-2-(9Z-octadecenoyl)-sn-glycero-3-phosphate + CoA</text>
        <dbReference type="Rhea" id="RHEA:37163"/>
        <dbReference type="ChEBI" id="CHEBI:57287"/>
        <dbReference type="ChEBI" id="CHEBI:57387"/>
        <dbReference type="ChEBI" id="CHEBI:74560"/>
        <dbReference type="ChEBI" id="CHEBI:74565"/>
    </reaction>
    <physiologicalReaction direction="left-to-right" evidence="4">
        <dbReference type="Rhea" id="RHEA:37164"/>
    </physiologicalReaction>
</comment>
<comment type="catalytic activity">
    <reaction evidence="4">
        <text>1-(5Z,8Z,11Z,14Z-eicosatetraenoyl)-sn-glycero-3-phosphate + (9Z)-octadecenoyl-CoA = 1-(5Z,8Z,11Z,14Z)-eicosatetraenoyl-2-(9Z)-octadecenoyl-sn-glycero-3-phosphate + CoA</text>
        <dbReference type="Rhea" id="RHEA:37455"/>
        <dbReference type="ChEBI" id="CHEBI:57287"/>
        <dbReference type="ChEBI" id="CHEBI:57387"/>
        <dbReference type="ChEBI" id="CHEBI:74938"/>
        <dbReference type="ChEBI" id="CHEBI:74941"/>
    </reaction>
    <physiologicalReaction direction="left-to-right" evidence="4">
        <dbReference type="Rhea" id="RHEA:37456"/>
    </physiologicalReaction>
</comment>
<comment type="activity regulation">
    <text evidence="4">Acyltransferase activity is inhibited by detergents such as Triton X-100 and 3-[(3-cholamidopropyl)dimethylammonio]-1-propanesulfonate (CHAPS). Acyltransferase activity is inhibited by the presence of magnesium and calcium.</text>
</comment>
<comment type="subunit">
    <text evidence="1">Interacts with ADRP, PLIN and PNPLA2. Interacts with PLIN5; promotes interaction with PNPLA2 (By similarity).</text>
</comment>
<comment type="subcellular location">
    <subcellularLocation>
        <location evidence="1">Cytoplasm</location>
    </subcellularLocation>
    <subcellularLocation>
        <location evidence="1">Lipid droplet</location>
    </subcellularLocation>
    <text evidence="1">Colocalized with PLIN and ADRP on the surface of lipid droplets. The localization is dependent upon the metabolic status of the adipocytes and the activity of PKA (By similarity).</text>
</comment>
<comment type="domain">
    <text>The HXXXXD motif is essential for acyltransferase activity and may constitute the binding site for the phosphate moiety of the glycerol-3-phosphate.</text>
</comment>
<comment type="similarity">
    <text evidence="6">Belongs to the peptidase S33 family. ABHD4/ABHD5 subfamily.</text>
</comment>
<proteinExistence type="evidence at transcript level"/>
<keyword id="KW-0007">Acetylation</keyword>
<keyword id="KW-0012">Acyltransferase</keyword>
<keyword id="KW-0963">Cytoplasm</keyword>
<keyword id="KW-0221">Differentiation</keyword>
<keyword id="KW-0276">Fatty acid metabolism</keyword>
<keyword id="KW-0444">Lipid biosynthesis</keyword>
<keyword id="KW-0551">Lipid droplet</keyword>
<keyword id="KW-0443">Lipid metabolism</keyword>
<keyword id="KW-0594">Phospholipid biosynthesis</keyword>
<keyword id="KW-1208">Phospholipid metabolism</keyword>
<keyword id="KW-0597">Phosphoprotein</keyword>
<keyword id="KW-1185">Reference proteome</keyword>
<keyword id="KW-0808">Transferase</keyword>
<name>ABHD5_PONAB</name>
<organism>
    <name type="scientific">Pongo abelii</name>
    <name type="common">Sumatran orangutan</name>
    <name type="synonym">Pongo pygmaeus abelii</name>
    <dbReference type="NCBI Taxonomy" id="9601"/>
    <lineage>
        <taxon>Eukaryota</taxon>
        <taxon>Metazoa</taxon>
        <taxon>Chordata</taxon>
        <taxon>Craniata</taxon>
        <taxon>Vertebrata</taxon>
        <taxon>Euteleostomi</taxon>
        <taxon>Mammalia</taxon>
        <taxon>Eutheria</taxon>
        <taxon>Euarchontoglires</taxon>
        <taxon>Primates</taxon>
        <taxon>Haplorrhini</taxon>
        <taxon>Catarrhini</taxon>
        <taxon>Hominidae</taxon>
        <taxon>Pongo</taxon>
    </lineage>
</organism>
<accession>Q5RBI4</accession>